<gene>
    <name type="primary">pta</name>
    <name type="synonym">ywfJ</name>
    <name type="ordered locus">BSU37660</name>
    <name type="ORF">ipa-88d</name>
</gene>
<organism>
    <name type="scientific">Bacillus subtilis (strain 168)</name>
    <dbReference type="NCBI Taxonomy" id="224308"/>
    <lineage>
        <taxon>Bacteria</taxon>
        <taxon>Bacillati</taxon>
        <taxon>Bacillota</taxon>
        <taxon>Bacilli</taxon>
        <taxon>Bacillales</taxon>
        <taxon>Bacillaceae</taxon>
        <taxon>Bacillus</taxon>
    </lineage>
</organism>
<proteinExistence type="evidence at protein level"/>
<reference key="1">
    <citation type="journal article" date="1993" name="Mol. Microbiol.">
        <title>Bacillus subtilis genome project: cloning and sequencing of the 97 kb region from 325 degrees to 333 degrees.</title>
        <authorList>
            <person name="Glaser P."/>
            <person name="Kunst F."/>
            <person name="Arnaud M."/>
            <person name="Coudart M.P."/>
            <person name="Gonzales W."/>
            <person name="Hullo M.-F."/>
            <person name="Ionescu M."/>
            <person name="Lubochinsky B."/>
            <person name="Marcelino L."/>
            <person name="Moszer I."/>
            <person name="Presecan E."/>
            <person name="Santana M."/>
            <person name="Schneider E."/>
            <person name="Schweizer J."/>
            <person name="Vertes A."/>
            <person name="Rapoport G."/>
            <person name="Danchin A."/>
        </authorList>
    </citation>
    <scope>NUCLEOTIDE SEQUENCE [GENOMIC DNA]</scope>
    <source>
        <strain>168</strain>
    </source>
</reference>
<reference key="2">
    <citation type="journal article" date="1997" name="Nature">
        <title>The complete genome sequence of the Gram-positive bacterium Bacillus subtilis.</title>
        <authorList>
            <person name="Kunst F."/>
            <person name="Ogasawara N."/>
            <person name="Moszer I."/>
            <person name="Albertini A.M."/>
            <person name="Alloni G."/>
            <person name="Azevedo V."/>
            <person name="Bertero M.G."/>
            <person name="Bessieres P."/>
            <person name="Bolotin A."/>
            <person name="Borchert S."/>
            <person name="Borriss R."/>
            <person name="Boursier L."/>
            <person name="Brans A."/>
            <person name="Braun M."/>
            <person name="Brignell S.C."/>
            <person name="Bron S."/>
            <person name="Brouillet S."/>
            <person name="Bruschi C.V."/>
            <person name="Caldwell B."/>
            <person name="Capuano V."/>
            <person name="Carter N.M."/>
            <person name="Choi S.-K."/>
            <person name="Codani J.-J."/>
            <person name="Connerton I.F."/>
            <person name="Cummings N.J."/>
            <person name="Daniel R.A."/>
            <person name="Denizot F."/>
            <person name="Devine K.M."/>
            <person name="Duesterhoeft A."/>
            <person name="Ehrlich S.D."/>
            <person name="Emmerson P.T."/>
            <person name="Entian K.-D."/>
            <person name="Errington J."/>
            <person name="Fabret C."/>
            <person name="Ferrari E."/>
            <person name="Foulger D."/>
            <person name="Fritz C."/>
            <person name="Fujita M."/>
            <person name="Fujita Y."/>
            <person name="Fuma S."/>
            <person name="Galizzi A."/>
            <person name="Galleron N."/>
            <person name="Ghim S.-Y."/>
            <person name="Glaser P."/>
            <person name="Goffeau A."/>
            <person name="Golightly E.J."/>
            <person name="Grandi G."/>
            <person name="Guiseppi G."/>
            <person name="Guy B.J."/>
            <person name="Haga K."/>
            <person name="Haiech J."/>
            <person name="Harwood C.R."/>
            <person name="Henaut A."/>
            <person name="Hilbert H."/>
            <person name="Holsappel S."/>
            <person name="Hosono S."/>
            <person name="Hullo M.-F."/>
            <person name="Itaya M."/>
            <person name="Jones L.-M."/>
            <person name="Joris B."/>
            <person name="Karamata D."/>
            <person name="Kasahara Y."/>
            <person name="Klaerr-Blanchard M."/>
            <person name="Klein C."/>
            <person name="Kobayashi Y."/>
            <person name="Koetter P."/>
            <person name="Koningstein G."/>
            <person name="Krogh S."/>
            <person name="Kumano M."/>
            <person name="Kurita K."/>
            <person name="Lapidus A."/>
            <person name="Lardinois S."/>
            <person name="Lauber J."/>
            <person name="Lazarevic V."/>
            <person name="Lee S.-M."/>
            <person name="Levine A."/>
            <person name="Liu H."/>
            <person name="Masuda S."/>
            <person name="Mauel C."/>
            <person name="Medigue C."/>
            <person name="Medina N."/>
            <person name="Mellado R.P."/>
            <person name="Mizuno M."/>
            <person name="Moestl D."/>
            <person name="Nakai S."/>
            <person name="Noback M."/>
            <person name="Noone D."/>
            <person name="O'Reilly M."/>
            <person name="Ogawa K."/>
            <person name="Ogiwara A."/>
            <person name="Oudega B."/>
            <person name="Park S.-H."/>
            <person name="Parro V."/>
            <person name="Pohl T.M."/>
            <person name="Portetelle D."/>
            <person name="Porwollik S."/>
            <person name="Prescott A.M."/>
            <person name="Presecan E."/>
            <person name="Pujic P."/>
            <person name="Purnelle B."/>
            <person name="Rapoport G."/>
            <person name="Rey M."/>
            <person name="Reynolds S."/>
            <person name="Rieger M."/>
            <person name="Rivolta C."/>
            <person name="Rocha E."/>
            <person name="Roche B."/>
            <person name="Rose M."/>
            <person name="Sadaie Y."/>
            <person name="Sato T."/>
            <person name="Scanlan E."/>
            <person name="Schleich S."/>
            <person name="Schroeter R."/>
            <person name="Scoffone F."/>
            <person name="Sekiguchi J."/>
            <person name="Sekowska A."/>
            <person name="Seror S.J."/>
            <person name="Serror P."/>
            <person name="Shin B.-S."/>
            <person name="Soldo B."/>
            <person name="Sorokin A."/>
            <person name="Tacconi E."/>
            <person name="Takagi T."/>
            <person name="Takahashi H."/>
            <person name="Takemaru K."/>
            <person name="Takeuchi M."/>
            <person name="Tamakoshi A."/>
            <person name="Tanaka T."/>
            <person name="Terpstra P."/>
            <person name="Tognoni A."/>
            <person name="Tosato V."/>
            <person name="Uchiyama S."/>
            <person name="Vandenbol M."/>
            <person name="Vannier F."/>
            <person name="Vassarotti A."/>
            <person name="Viari A."/>
            <person name="Wambutt R."/>
            <person name="Wedler E."/>
            <person name="Wedler H."/>
            <person name="Weitzenegger T."/>
            <person name="Winters P."/>
            <person name="Wipat A."/>
            <person name="Yamamoto H."/>
            <person name="Yamane K."/>
            <person name="Yasumoto K."/>
            <person name="Yata K."/>
            <person name="Yoshida K."/>
            <person name="Yoshikawa H.-F."/>
            <person name="Zumstein E."/>
            <person name="Yoshikawa H."/>
            <person name="Danchin A."/>
        </authorList>
    </citation>
    <scope>NUCLEOTIDE SEQUENCE [LARGE SCALE GENOMIC DNA]</scope>
    <source>
        <strain>168</strain>
    </source>
</reference>
<reference key="3">
    <citation type="journal article" date="1997" name="Electrophoresis">
        <title>First steps from a two-dimensional protein index towards a response-regulation map for Bacillus subtilis.</title>
        <authorList>
            <person name="Antelmann H."/>
            <person name="Bernhardt J."/>
            <person name="Schmid R."/>
            <person name="Mach H."/>
            <person name="Voelker U."/>
            <person name="Hecker M."/>
        </authorList>
    </citation>
    <scope>PROTEIN SEQUENCE OF 2-11</scope>
    <source>
        <strain>168 / IS58</strain>
    </source>
</reference>
<evidence type="ECO:0000269" key="1">
    <source>
    </source>
</evidence>
<evidence type="ECO:0000305" key="2"/>
<evidence type="ECO:0007829" key="3">
    <source>
        <dbReference type="PDB" id="1TD9"/>
    </source>
</evidence>
<evidence type="ECO:0007829" key="4">
    <source>
        <dbReference type="PDB" id="1XCO"/>
    </source>
</evidence>
<sequence>MADLFSTVQEKVAGKDVKIVFPEGLDERILEAVSKLAGNKVLNPIVIGNENEIQAKAKELNLTLGGVKIYDPHTYEGMEDLVQAFVERRKGKATEEQARKALLDENYFGTMLVYKGLADGLVSGAAHSTADTVRPALQIIKTKEGVKKTSGVFIMARGEEQYVFADCAINIAPDSQDLAEIAIESANTAKMFDIEPRVAMLSFSTKGSAKSDETEKVADAVKIAKEKAPELTLDGEFQFDAAFVPSVAEKKAPDSEIKGDANVFVFPSLEAGNIGYKIAQRLGNFEAVGPILQGLNMPVNDLSRGCNAEDVYNLALITAAQAL</sequence>
<accession>P39646</accession>
<comment type="catalytic activity">
    <reaction>
        <text>acetyl-CoA + phosphate = acetyl phosphate + CoA</text>
        <dbReference type="Rhea" id="RHEA:19521"/>
        <dbReference type="ChEBI" id="CHEBI:22191"/>
        <dbReference type="ChEBI" id="CHEBI:43474"/>
        <dbReference type="ChEBI" id="CHEBI:57287"/>
        <dbReference type="ChEBI" id="CHEBI:57288"/>
        <dbReference type="EC" id="2.3.1.8"/>
    </reaction>
</comment>
<comment type="pathway">
    <text>Metabolic intermediate biosynthesis; acetyl-CoA biosynthesis; acetyl-CoA from acetate: step 2/2.</text>
</comment>
<comment type="subcellular location">
    <subcellularLocation>
        <location evidence="2">Cytoplasm</location>
    </subcellularLocation>
</comment>
<comment type="similarity">
    <text evidence="2">Belongs to the phosphate acetyltransferase and butyryltransferase family.</text>
</comment>
<name>PTAS_BACSU</name>
<dbReference type="EC" id="2.3.1.8"/>
<dbReference type="EMBL" id="X73124">
    <property type="protein sequence ID" value="CAA51644.1"/>
    <property type="molecule type" value="Genomic_DNA"/>
</dbReference>
<dbReference type="EMBL" id="AL009126">
    <property type="protein sequence ID" value="CAB15793.1"/>
    <property type="molecule type" value="Genomic_DNA"/>
</dbReference>
<dbReference type="PIR" id="S39743">
    <property type="entry name" value="S39743"/>
</dbReference>
<dbReference type="RefSeq" id="NP_391646.1">
    <property type="nucleotide sequence ID" value="NC_000964.3"/>
</dbReference>
<dbReference type="RefSeq" id="WP_003243393.1">
    <property type="nucleotide sequence ID" value="NZ_OZ025638.1"/>
</dbReference>
<dbReference type="PDB" id="1TD9">
    <property type="method" value="X-ray"/>
    <property type="resolution" value="2.75 A"/>
    <property type="chains" value="A/B/C/D/E/F=1-323"/>
</dbReference>
<dbReference type="PDB" id="1XCO">
    <property type="method" value="X-ray"/>
    <property type="resolution" value="2.85 A"/>
    <property type="chains" value="A/B/C/D/E/F=1-323"/>
</dbReference>
<dbReference type="PDBsum" id="1TD9"/>
<dbReference type="PDBsum" id="1XCO"/>
<dbReference type="SMR" id="P39646"/>
<dbReference type="FunCoup" id="P39646">
    <property type="interactions" value="270"/>
</dbReference>
<dbReference type="STRING" id="224308.BSU37660"/>
<dbReference type="DrugBank" id="DB02897">
    <property type="generic name" value="Acetylphosphate"/>
</dbReference>
<dbReference type="jPOST" id="P39646"/>
<dbReference type="PaxDb" id="224308-BSU37660"/>
<dbReference type="EnsemblBacteria" id="CAB15793">
    <property type="protein sequence ID" value="CAB15793"/>
    <property type="gene ID" value="BSU_37660"/>
</dbReference>
<dbReference type="GeneID" id="936581"/>
<dbReference type="KEGG" id="bsu:BSU37660"/>
<dbReference type="PATRIC" id="fig|224308.179.peg.4078"/>
<dbReference type="eggNOG" id="COG0280">
    <property type="taxonomic scope" value="Bacteria"/>
</dbReference>
<dbReference type="InParanoid" id="P39646"/>
<dbReference type="OrthoDB" id="9805787at2"/>
<dbReference type="PhylomeDB" id="P39646"/>
<dbReference type="BioCyc" id="BSUB:BSU37660-MONOMER"/>
<dbReference type="UniPathway" id="UPA00340">
    <property type="reaction ID" value="UER00459"/>
</dbReference>
<dbReference type="EvolutionaryTrace" id="P39646"/>
<dbReference type="Proteomes" id="UP000001570">
    <property type="component" value="Chromosome"/>
</dbReference>
<dbReference type="GO" id="GO:0005737">
    <property type="term" value="C:cytoplasm"/>
    <property type="evidence" value="ECO:0007669"/>
    <property type="project" value="UniProtKB-SubCell"/>
</dbReference>
<dbReference type="GO" id="GO:0008959">
    <property type="term" value="F:phosphate acetyltransferase activity"/>
    <property type="evidence" value="ECO:0007669"/>
    <property type="project" value="UniProtKB-EC"/>
</dbReference>
<dbReference type="GO" id="GO:0006085">
    <property type="term" value="P:acetyl-CoA biosynthetic process"/>
    <property type="evidence" value="ECO:0007669"/>
    <property type="project" value="UniProtKB-UniPathway"/>
</dbReference>
<dbReference type="Gene3D" id="3.40.50.10950">
    <property type="match status" value="1"/>
</dbReference>
<dbReference type="Gene3D" id="3.40.50.10750">
    <property type="entry name" value="Isocitrate/Isopropylmalate dehydrogenase-like"/>
    <property type="match status" value="1"/>
</dbReference>
<dbReference type="InterPro" id="IPR012147">
    <property type="entry name" value="P_Ac_Bu_trans"/>
</dbReference>
<dbReference type="InterPro" id="IPR004614">
    <property type="entry name" value="P_AcTrfase"/>
</dbReference>
<dbReference type="InterPro" id="IPR042113">
    <property type="entry name" value="P_AcTrfase_dom1"/>
</dbReference>
<dbReference type="InterPro" id="IPR042112">
    <property type="entry name" value="P_AcTrfase_dom2"/>
</dbReference>
<dbReference type="InterPro" id="IPR050500">
    <property type="entry name" value="Phos_Acetyltrans/Butyryltrans"/>
</dbReference>
<dbReference type="InterPro" id="IPR002505">
    <property type="entry name" value="PTA_PTB"/>
</dbReference>
<dbReference type="NCBIfam" id="NF007233">
    <property type="entry name" value="PRK09653.1"/>
    <property type="match status" value="1"/>
</dbReference>
<dbReference type="NCBIfam" id="TIGR00651">
    <property type="entry name" value="pta"/>
    <property type="match status" value="1"/>
</dbReference>
<dbReference type="PANTHER" id="PTHR43356">
    <property type="entry name" value="PHOSPHATE ACETYLTRANSFERASE"/>
    <property type="match status" value="1"/>
</dbReference>
<dbReference type="PANTHER" id="PTHR43356:SF3">
    <property type="entry name" value="PHOSPHATE ACETYLTRANSFERASE"/>
    <property type="match status" value="1"/>
</dbReference>
<dbReference type="Pfam" id="PF01515">
    <property type="entry name" value="PTA_PTB"/>
    <property type="match status" value="1"/>
</dbReference>
<dbReference type="PIRSF" id="PIRSF000428">
    <property type="entry name" value="P_Ac_trans"/>
    <property type="match status" value="1"/>
</dbReference>
<dbReference type="SUPFAM" id="SSF53659">
    <property type="entry name" value="Isocitrate/Isopropylmalate dehydrogenase-like"/>
    <property type="match status" value="1"/>
</dbReference>
<keyword id="KW-0002">3D-structure</keyword>
<keyword id="KW-0012">Acyltransferase</keyword>
<keyword id="KW-0963">Cytoplasm</keyword>
<keyword id="KW-0903">Direct protein sequencing</keyword>
<keyword id="KW-1185">Reference proteome</keyword>
<keyword id="KW-0808">Transferase</keyword>
<feature type="initiator methionine" description="Removed" evidence="1">
    <location>
        <position position="1"/>
    </location>
</feature>
<feature type="chain" id="PRO_0000179120" description="Phosphate acetyltransferase">
    <location>
        <begin position="2"/>
        <end position="323"/>
    </location>
</feature>
<feature type="helix" evidence="3">
    <location>
        <begin position="2"/>
        <end position="12"/>
    </location>
</feature>
<feature type="strand" evidence="3">
    <location>
        <begin position="18"/>
        <end position="22"/>
    </location>
</feature>
<feature type="helix" evidence="3">
    <location>
        <begin position="27"/>
        <end position="38"/>
    </location>
</feature>
<feature type="strand" evidence="3">
    <location>
        <begin position="41"/>
        <end position="48"/>
    </location>
</feature>
<feature type="helix" evidence="3">
    <location>
        <begin position="50"/>
        <end position="58"/>
    </location>
</feature>
<feature type="turn" evidence="3">
    <location>
        <begin position="59"/>
        <end position="61"/>
    </location>
</feature>
<feature type="strand" evidence="3">
    <location>
        <begin position="68"/>
        <end position="70"/>
    </location>
</feature>
<feature type="turn" evidence="3">
    <location>
        <begin position="72"/>
        <end position="74"/>
    </location>
</feature>
<feature type="helix" evidence="3">
    <location>
        <begin position="78"/>
        <end position="88"/>
    </location>
</feature>
<feature type="turn" evidence="3">
    <location>
        <begin position="89"/>
        <end position="91"/>
    </location>
</feature>
<feature type="helix" evidence="3">
    <location>
        <begin position="95"/>
        <end position="101"/>
    </location>
</feature>
<feature type="helix" evidence="3">
    <location>
        <begin position="105"/>
        <end position="114"/>
    </location>
</feature>
<feature type="strand" evidence="3">
    <location>
        <begin position="119"/>
        <end position="123"/>
    </location>
</feature>
<feature type="helix" evidence="3">
    <location>
        <begin position="129"/>
        <end position="138"/>
    </location>
</feature>
<feature type="strand" evidence="3">
    <location>
        <begin position="150"/>
        <end position="157"/>
    </location>
</feature>
<feature type="strand" evidence="3">
    <location>
        <begin position="160"/>
        <end position="165"/>
    </location>
</feature>
<feature type="strand" evidence="3">
    <location>
        <begin position="167"/>
        <end position="169"/>
    </location>
</feature>
<feature type="helix" evidence="3">
    <location>
        <begin position="175"/>
        <end position="190"/>
    </location>
</feature>
<feature type="turn" evidence="3">
    <location>
        <begin position="191"/>
        <end position="193"/>
    </location>
</feature>
<feature type="strand" evidence="3">
    <location>
        <begin position="198"/>
        <end position="201"/>
    </location>
</feature>
<feature type="strand" evidence="3">
    <location>
        <begin position="203"/>
        <end position="205"/>
    </location>
</feature>
<feature type="helix" evidence="3">
    <location>
        <begin position="212"/>
        <end position="227"/>
    </location>
</feature>
<feature type="strand" evidence="3">
    <location>
        <begin position="233"/>
        <end position="237"/>
    </location>
</feature>
<feature type="helix" evidence="3">
    <location>
        <begin position="239"/>
        <end position="243"/>
    </location>
</feature>
<feature type="helix" evidence="3">
    <location>
        <begin position="245"/>
        <end position="251"/>
    </location>
</feature>
<feature type="strand" evidence="4">
    <location>
        <begin position="254"/>
        <end position="256"/>
    </location>
</feature>
<feature type="strand" evidence="3">
    <location>
        <begin position="262"/>
        <end position="265"/>
    </location>
</feature>
<feature type="helix" evidence="3">
    <location>
        <begin position="269"/>
        <end position="281"/>
    </location>
</feature>
<feature type="turn" evidence="3">
    <location>
        <begin position="282"/>
        <end position="284"/>
    </location>
</feature>
<feature type="strand" evidence="3">
    <location>
        <begin position="286"/>
        <end position="297"/>
    </location>
</feature>
<feature type="strand" evidence="3">
    <location>
        <begin position="299"/>
        <end position="301"/>
    </location>
</feature>
<feature type="helix" evidence="3">
    <location>
        <begin position="308"/>
        <end position="322"/>
    </location>
</feature>
<protein>
    <recommendedName>
        <fullName>Phosphate acetyltransferase</fullName>
        <ecNumber>2.3.1.8</ecNumber>
    </recommendedName>
    <alternativeName>
        <fullName>Phosphotransacetylase</fullName>
    </alternativeName>
    <alternativeName>
        <fullName>Vegetative protein 43</fullName>
        <shortName>VEG43</shortName>
    </alternativeName>
</protein>